<proteinExistence type="inferred from homology"/>
<gene>
    <name type="ordered locus">AHA_0543</name>
</gene>
<protein>
    <recommendedName>
        <fullName evidence="1">UPF0178 protein AHA_0543</fullName>
    </recommendedName>
</protein>
<evidence type="ECO:0000255" key="1">
    <source>
        <dbReference type="HAMAP-Rule" id="MF_00489"/>
    </source>
</evidence>
<keyword id="KW-1185">Reference proteome</keyword>
<sequence length="150" mass="16365">MPIWVDADACPIPVKEILYRAAHRAQVVTTLVANQGLRVPPSPFIKTQQVEKGFDVADHVIAQQVKPGDLVITGDIPLASWVIDAGGEALNPRGEIYTRETIKARLGMRNFMEELRSAGVQTGGPAPLNAADKQRFANALDKWLIRGKLS</sequence>
<organism>
    <name type="scientific">Aeromonas hydrophila subsp. hydrophila (strain ATCC 7966 / DSM 30187 / BCRC 13018 / CCUG 14551 / JCM 1027 / KCTC 2358 / NCIMB 9240 / NCTC 8049)</name>
    <dbReference type="NCBI Taxonomy" id="380703"/>
    <lineage>
        <taxon>Bacteria</taxon>
        <taxon>Pseudomonadati</taxon>
        <taxon>Pseudomonadota</taxon>
        <taxon>Gammaproteobacteria</taxon>
        <taxon>Aeromonadales</taxon>
        <taxon>Aeromonadaceae</taxon>
        <taxon>Aeromonas</taxon>
    </lineage>
</organism>
<reference key="1">
    <citation type="journal article" date="2006" name="J. Bacteriol.">
        <title>Genome sequence of Aeromonas hydrophila ATCC 7966T: jack of all trades.</title>
        <authorList>
            <person name="Seshadri R."/>
            <person name="Joseph S.W."/>
            <person name="Chopra A.K."/>
            <person name="Sha J."/>
            <person name="Shaw J."/>
            <person name="Graf J."/>
            <person name="Haft D.H."/>
            <person name="Wu M."/>
            <person name="Ren Q."/>
            <person name="Rosovitz M.J."/>
            <person name="Madupu R."/>
            <person name="Tallon L."/>
            <person name="Kim M."/>
            <person name="Jin S."/>
            <person name="Vuong H."/>
            <person name="Stine O.C."/>
            <person name="Ali A."/>
            <person name="Horneman A.J."/>
            <person name="Heidelberg J.F."/>
        </authorList>
    </citation>
    <scope>NUCLEOTIDE SEQUENCE [LARGE SCALE GENOMIC DNA]</scope>
    <source>
        <strain>ATCC 7966 / DSM 30187 / BCRC 13018 / CCUG 14551 / JCM 1027 / KCTC 2358 / NCIMB 9240 / NCTC 8049</strain>
    </source>
</reference>
<feature type="chain" id="PRO_1000014407" description="UPF0178 protein AHA_0543">
    <location>
        <begin position="1"/>
        <end position="150"/>
    </location>
</feature>
<name>Y543_AERHH</name>
<accession>A0KFQ0</accession>
<comment type="similarity">
    <text evidence="1">Belongs to the UPF0178 family.</text>
</comment>
<dbReference type="EMBL" id="CP000462">
    <property type="protein sequence ID" value="ABK39838.1"/>
    <property type="molecule type" value="Genomic_DNA"/>
</dbReference>
<dbReference type="RefSeq" id="WP_011704516.1">
    <property type="nucleotide sequence ID" value="NC_008570.1"/>
</dbReference>
<dbReference type="RefSeq" id="YP_855076.1">
    <property type="nucleotide sequence ID" value="NC_008570.1"/>
</dbReference>
<dbReference type="STRING" id="380703.AHA_0543"/>
<dbReference type="EnsemblBacteria" id="ABK39838">
    <property type="protein sequence ID" value="ABK39838"/>
    <property type="gene ID" value="AHA_0543"/>
</dbReference>
<dbReference type="GeneID" id="4488883"/>
<dbReference type="KEGG" id="aha:AHA_0543"/>
<dbReference type="PATRIC" id="fig|380703.7.peg.537"/>
<dbReference type="eggNOG" id="COG1671">
    <property type="taxonomic scope" value="Bacteria"/>
</dbReference>
<dbReference type="HOGENOM" id="CLU_106619_2_1_6"/>
<dbReference type="OrthoDB" id="9798918at2"/>
<dbReference type="Proteomes" id="UP000000756">
    <property type="component" value="Chromosome"/>
</dbReference>
<dbReference type="CDD" id="cd18720">
    <property type="entry name" value="PIN_YqxD-like"/>
    <property type="match status" value="1"/>
</dbReference>
<dbReference type="HAMAP" id="MF_00489">
    <property type="entry name" value="UPF0178"/>
    <property type="match status" value="1"/>
</dbReference>
<dbReference type="InterPro" id="IPR003791">
    <property type="entry name" value="UPF0178"/>
</dbReference>
<dbReference type="NCBIfam" id="NF001095">
    <property type="entry name" value="PRK00124.1"/>
    <property type="match status" value="1"/>
</dbReference>
<dbReference type="PANTHER" id="PTHR35146">
    <property type="entry name" value="UPF0178 PROTEIN YAII"/>
    <property type="match status" value="1"/>
</dbReference>
<dbReference type="PANTHER" id="PTHR35146:SF1">
    <property type="entry name" value="UPF0178 PROTEIN YAII"/>
    <property type="match status" value="1"/>
</dbReference>
<dbReference type="Pfam" id="PF02639">
    <property type="entry name" value="DUF188"/>
    <property type="match status" value="1"/>
</dbReference>